<evidence type="ECO:0000255" key="1"/>
<evidence type="ECO:0000305" key="2"/>
<feature type="chain" id="PRO_0000077928" description="Uncharacterized protein HI_0485.1">
    <location>
        <begin position="1"/>
        <end position="124"/>
    </location>
</feature>
<feature type="transmembrane region" description="Helical" evidence="1">
    <location>
        <begin position="14"/>
        <end position="34"/>
    </location>
</feature>
<feature type="transmembrane region" description="Helical" evidence="1">
    <location>
        <begin position="41"/>
        <end position="61"/>
    </location>
</feature>
<feature type="transmembrane region" description="Helical" evidence="1">
    <location>
        <begin position="85"/>
        <end position="105"/>
    </location>
</feature>
<proteinExistence type="predicted"/>
<sequence length="124" mass="14546">MSRILSHAKKNYRKAIVIESLLLVVFYLLIYGWQRQSAVDFSYGFLSAFLPFCTFIFIIFYRKQNFSTKLTALYRAEAIKFILTMVFIIIAIKWLFVINFIAFFVGFLLALVLNNIIPLILNKI</sequence>
<dbReference type="EMBL" id="L42023">
    <property type="protein sequence ID" value="AAC22145.1"/>
    <property type="molecule type" value="Genomic_DNA"/>
</dbReference>
<dbReference type="RefSeq" id="NP_438646.1">
    <property type="nucleotide sequence ID" value="NC_000907.1"/>
</dbReference>
<dbReference type="SMR" id="O86225"/>
<dbReference type="STRING" id="71421.HI_0485.1"/>
<dbReference type="EnsemblBacteria" id="AAC22145">
    <property type="protein sequence ID" value="AAC22145"/>
    <property type="gene ID" value="HI_0485.1"/>
</dbReference>
<dbReference type="KEGG" id="hin:HI_0485.1"/>
<dbReference type="PATRIC" id="fig|71421.8.peg.505"/>
<dbReference type="eggNOG" id="COG3312">
    <property type="taxonomic scope" value="Bacteria"/>
</dbReference>
<dbReference type="HOGENOM" id="CLU_121415_4_0_6"/>
<dbReference type="OrthoDB" id="5771248at2"/>
<dbReference type="BioCyc" id="HINF71421:G1GJ1-501-MONOMER"/>
<dbReference type="Proteomes" id="UP000000579">
    <property type="component" value="Chromosome"/>
</dbReference>
<dbReference type="GO" id="GO:0005886">
    <property type="term" value="C:plasma membrane"/>
    <property type="evidence" value="ECO:0007669"/>
    <property type="project" value="UniProtKB-SubCell"/>
</dbReference>
<dbReference type="InterPro" id="IPR005598">
    <property type="entry name" value="ATP_synth_I"/>
</dbReference>
<dbReference type="NCBIfam" id="NF004763">
    <property type="entry name" value="PRK06099.1"/>
    <property type="match status" value="1"/>
</dbReference>
<dbReference type="Pfam" id="PF03899">
    <property type="entry name" value="ATP-synt_I"/>
    <property type="match status" value="1"/>
</dbReference>
<comment type="subcellular location">
    <subcellularLocation>
        <location evidence="2">Cell membrane</location>
        <topology evidence="2">Multi-pass membrane protein</topology>
    </subcellularLocation>
</comment>
<name>Y485A_HAEIN</name>
<reference key="1">
    <citation type="journal article" date="1995" name="Science">
        <title>Whole-genome random sequencing and assembly of Haemophilus influenzae Rd.</title>
        <authorList>
            <person name="Fleischmann R.D."/>
            <person name="Adams M.D."/>
            <person name="White O."/>
            <person name="Clayton R.A."/>
            <person name="Kirkness E.F."/>
            <person name="Kerlavage A.R."/>
            <person name="Bult C.J."/>
            <person name="Tomb J.-F."/>
            <person name="Dougherty B.A."/>
            <person name="Merrick J.M."/>
            <person name="McKenney K."/>
            <person name="Sutton G.G."/>
            <person name="FitzHugh W."/>
            <person name="Fields C.A."/>
            <person name="Gocayne J.D."/>
            <person name="Scott J.D."/>
            <person name="Shirley R."/>
            <person name="Liu L.-I."/>
            <person name="Glodek A."/>
            <person name="Kelley J.M."/>
            <person name="Weidman J.F."/>
            <person name="Phillips C.A."/>
            <person name="Spriggs T."/>
            <person name="Hedblom E."/>
            <person name="Cotton M.D."/>
            <person name="Utterback T.R."/>
            <person name="Hanna M.C."/>
            <person name="Nguyen D.T."/>
            <person name="Saudek D.M."/>
            <person name="Brandon R.C."/>
            <person name="Fine L.D."/>
            <person name="Fritchman J.L."/>
            <person name="Fuhrmann J.L."/>
            <person name="Geoghagen N.S.M."/>
            <person name="Gnehm C.L."/>
            <person name="McDonald L.A."/>
            <person name="Small K.V."/>
            <person name="Fraser C.M."/>
            <person name="Smith H.O."/>
            <person name="Venter J.C."/>
        </authorList>
    </citation>
    <scope>NUCLEOTIDE SEQUENCE [LARGE SCALE GENOMIC DNA]</scope>
    <source>
        <strain>ATCC 51907 / DSM 11121 / KW20 / Rd</strain>
    </source>
</reference>
<reference key="2">
    <citation type="submission" date="1998-05" db="EMBL/GenBank/DDBJ databases">
        <authorList>
            <person name="White O."/>
            <person name="Clayton R.A."/>
            <person name="Kerlavage A.R."/>
            <person name="Fleischmann R.D."/>
            <person name="Peterson J."/>
            <person name="Hickey E."/>
            <person name="Dodson R."/>
            <person name="Gwinn M."/>
        </authorList>
    </citation>
    <scope>IDENTIFICATION</scope>
</reference>
<keyword id="KW-1003">Cell membrane</keyword>
<keyword id="KW-0472">Membrane</keyword>
<keyword id="KW-1185">Reference proteome</keyword>
<keyword id="KW-0812">Transmembrane</keyword>
<keyword id="KW-1133">Transmembrane helix</keyword>
<protein>
    <recommendedName>
        <fullName>Uncharacterized protein HI_0485.1</fullName>
    </recommendedName>
</protein>
<gene>
    <name type="ordered locus">HI_0485.1</name>
</gene>
<accession>O86225</accession>
<organism>
    <name type="scientific">Haemophilus influenzae (strain ATCC 51907 / DSM 11121 / KW20 / Rd)</name>
    <dbReference type="NCBI Taxonomy" id="71421"/>
    <lineage>
        <taxon>Bacteria</taxon>
        <taxon>Pseudomonadati</taxon>
        <taxon>Pseudomonadota</taxon>
        <taxon>Gammaproteobacteria</taxon>
        <taxon>Pasteurellales</taxon>
        <taxon>Pasteurellaceae</taxon>
        <taxon>Haemophilus</taxon>
    </lineage>
</organism>